<proteinExistence type="evidence at protein level"/>
<gene>
    <name evidence="1" type="primary">whiA</name>
    <name type="ordered locus">Rv1423</name>
</gene>
<dbReference type="EMBL" id="AL123456">
    <property type="protein sequence ID" value="CCP44182.1"/>
    <property type="status" value="ALT_INIT"/>
    <property type="molecule type" value="Genomic_DNA"/>
</dbReference>
<dbReference type="PIR" id="D70903">
    <property type="entry name" value="D70903"/>
</dbReference>
<dbReference type="RefSeq" id="NP_215939.1">
    <property type="nucleotide sequence ID" value="NC_000962.3"/>
</dbReference>
<dbReference type="SMR" id="P9WF45"/>
<dbReference type="FunCoup" id="P9WF45">
    <property type="interactions" value="2"/>
</dbReference>
<dbReference type="STRING" id="83332.Rv1423"/>
<dbReference type="PaxDb" id="83332-Rv1423"/>
<dbReference type="DNASU" id="886674"/>
<dbReference type="GeneID" id="886674"/>
<dbReference type="KEGG" id="mtu:Rv1423"/>
<dbReference type="PATRIC" id="fig|83332.12.peg.1588"/>
<dbReference type="TubercuList" id="Rv1423"/>
<dbReference type="eggNOG" id="COG1481">
    <property type="taxonomic scope" value="Bacteria"/>
</dbReference>
<dbReference type="InParanoid" id="P9WF45"/>
<dbReference type="OrthoDB" id="5197218at2"/>
<dbReference type="Proteomes" id="UP000001584">
    <property type="component" value="Chromosome"/>
</dbReference>
<dbReference type="GO" id="GO:0009274">
    <property type="term" value="C:peptidoglycan-based cell wall"/>
    <property type="evidence" value="ECO:0007005"/>
    <property type="project" value="MTBBASE"/>
</dbReference>
<dbReference type="GO" id="GO:0005886">
    <property type="term" value="C:plasma membrane"/>
    <property type="evidence" value="ECO:0007005"/>
    <property type="project" value="MTBBASE"/>
</dbReference>
<dbReference type="GO" id="GO:0003677">
    <property type="term" value="F:DNA binding"/>
    <property type="evidence" value="ECO:0007669"/>
    <property type="project" value="UniProtKB-UniRule"/>
</dbReference>
<dbReference type="GO" id="GO:0051301">
    <property type="term" value="P:cell division"/>
    <property type="evidence" value="ECO:0007669"/>
    <property type="project" value="UniProtKB-UniRule"/>
</dbReference>
<dbReference type="GO" id="GO:0043937">
    <property type="term" value="P:regulation of sporulation"/>
    <property type="evidence" value="ECO:0000318"/>
    <property type="project" value="GO_Central"/>
</dbReference>
<dbReference type="FunFam" id="3.10.28.10:FF:000001">
    <property type="entry name" value="Probable cell division protein WhiA"/>
    <property type="match status" value="1"/>
</dbReference>
<dbReference type="Gene3D" id="3.10.28.10">
    <property type="entry name" value="Homing endonucleases"/>
    <property type="match status" value="1"/>
</dbReference>
<dbReference type="HAMAP" id="MF_01420">
    <property type="entry name" value="HTH_type_WhiA"/>
    <property type="match status" value="1"/>
</dbReference>
<dbReference type="InterPro" id="IPR027434">
    <property type="entry name" value="Homing_endonucl"/>
</dbReference>
<dbReference type="InterPro" id="IPR018478">
    <property type="entry name" value="Sporu_reg_WhiA_N_dom"/>
</dbReference>
<dbReference type="InterPro" id="IPR003802">
    <property type="entry name" value="Sporulation_regulator_WhiA"/>
</dbReference>
<dbReference type="InterPro" id="IPR023054">
    <property type="entry name" value="Sporulation_regulator_WhiA_C"/>
</dbReference>
<dbReference type="InterPro" id="IPR039518">
    <property type="entry name" value="WhiA_LAGLIDADG_dom"/>
</dbReference>
<dbReference type="NCBIfam" id="TIGR00647">
    <property type="entry name" value="DNA_bind_WhiA"/>
    <property type="match status" value="1"/>
</dbReference>
<dbReference type="PANTHER" id="PTHR37307">
    <property type="entry name" value="CELL DIVISION PROTEIN WHIA-RELATED"/>
    <property type="match status" value="1"/>
</dbReference>
<dbReference type="PANTHER" id="PTHR37307:SF1">
    <property type="entry name" value="CELL DIVISION PROTEIN WHIA-RELATED"/>
    <property type="match status" value="1"/>
</dbReference>
<dbReference type="Pfam" id="PF02650">
    <property type="entry name" value="HTH_WhiA"/>
    <property type="match status" value="1"/>
</dbReference>
<dbReference type="Pfam" id="PF14527">
    <property type="entry name" value="LAGLIDADG_WhiA"/>
    <property type="match status" value="1"/>
</dbReference>
<dbReference type="Pfam" id="PF10298">
    <property type="entry name" value="WhiA_N"/>
    <property type="match status" value="1"/>
</dbReference>
<name>WHIA_MYCTU</name>
<organism>
    <name type="scientific">Mycobacterium tuberculosis (strain ATCC 25618 / H37Rv)</name>
    <dbReference type="NCBI Taxonomy" id="83332"/>
    <lineage>
        <taxon>Bacteria</taxon>
        <taxon>Bacillati</taxon>
        <taxon>Actinomycetota</taxon>
        <taxon>Actinomycetes</taxon>
        <taxon>Mycobacteriales</taxon>
        <taxon>Mycobacteriaceae</taxon>
        <taxon>Mycobacterium</taxon>
        <taxon>Mycobacterium tuberculosis complex</taxon>
    </lineage>
</organism>
<comment type="function">
    <text evidence="1">Involved in cell division and chromosome segregation.</text>
</comment>
<comment type="similarity">
    <text evidence="1">Belongs to the WhiA family.</text>
</comment>
<comment type="sequence caution" evidence="2">
    <conflict type="erroneous initiation">
        <sequence resource="EMBL-CDS" id="CCP44182"/>
    </conflict>
    <text>Truncated N-terminus.</text>
</comment>
<sequence>MAMTTDVKDELSRLVVKSVSARRAEVTSLLRFAGGLHIVGGRVVVEAELDLGSIARRLRKEIFELYGYTAVVHVLSASGIRKSTRYVLRVANDGEALARQTGLLDMRGRPVRGLPAQVVGGSIDDAEAAWRGAFLAHGSLTEPGRSSALEVSCPGPEAALALVGAARRLGVGAKAREVRGADRVVVRDGEAIGALLTRMGAQDTRLVWEERRLRREVRATANRLANFDDANLRRSARAAVAAAARVERALEILGDTVPEHLASAGKLRVEHRQASLEELGRLADPPMTKDAVAGRIRRLLSMADRKAKVDGIPDTESVVTPDLLEDA</sequence>
<keyword id="KW-0131">Cell cycle</keyword>
<keyword id="KW-0132">Cell division</keyword>
<keyword id="KW-0903">Direct protein sequencing</keyword>
<keyword id="KW-0238">DNA-binding</keyword>
<keyword id="KW-1185">Reference proteome</keyword>
<accession>P9WF45</accession>
<accession>L0T6T7</accession>
<accession>P71692</accession>
<accession>Q7D8G9</accession>
<evidence type="ECO:0000255" key="1">
    <source>
        <dbReference type="HAMAP-Rule" id="MF_01420"/>
    </source>
</evidence>
<evidence type="ECO:0000269" key="2">
    <source>
    </source>
</evidence>
<feature type="initiator methionine" description="Removed" evidence="2">
    <location>
        <position position="1"/>
    </location>
</feature>
<feature type="chain" id="PRO_0000376534" description="Probable cell division protein WhiA">
    <location>
        <begin position="2"/>
        <end position="327"/>
    </location>
</feature>
<feature type="DNA-binding region" description="H-T-H motif" evidence="1">
    <location>
        <begin position="275"/>
        <end position="308"/>
    </location>
</feature>
<protein>
    <recommendedName>
        <fullName evidence="1">Probable cell division protein WhiA</fullName>
    </recommendedName>
</protein>
<reference key="1">
    <citation type="journal article" date="1998" name="Nature">
        <title>Deciphering the biology of Mycobacterium tuberculosis from the complete genome sequence.</title>
        <authorList>
            <person name="Cole S.T."/>
            <person name="Brosch R."/>
            <person name="Parkhill J."/>
            <person name="Garnier T."/>
            <person name="Churcher C.M."/>
            <person name="Harris D.E."/>
            <person name="Gordon S.V."/>
            <person name="Eiglmeier K."/>
            <person name="Gas S."/>
            <person name="Barry C.E. III"/>
            <person name="Tekaia F."/>
            <person name="Badcock K."/>
            <person name="Basham D."/>
            <person name="Brown D."/>
            <person name="Chillingworth T."/>
            <person name="Connor R."/>
            <person name="Davies R.M."/>
            <person name="Devlin K."/>
            <person name="Feltwell T."/>
            <person name="Gentles S."/>
            <person name="Hamlin N."/>
            <person name="Holroyd S."/>
            <person name="Hornsby T."/>
            <person name="Jagels K."/>
            <person name="Krogh A."/>
            <person name="McLean J."/>
            <person name="Moule S."/>
            <person name="Murphy L.D."/>
            <person name="Oliver S."/>
            <person name="Osborne J."/>
            <person name="Quail M.A."/>
            <person name="Rajandream M.A."/>
            <person name="Rogers J."/>
            <person name="Rutter S."/>
            <person name="Seeger K."/>
            <person name="Skelton S."/>
            <person name="Squares S."/>
            <person name="Squares R."/>
            <person name="Sulston J.E."/>
            <person name="Taylor K."/>
            <person name="Whitehead S."/>
            <person name="Barrell B.G."/>
        </authorList>
    </citation>
    <scope>NUCLEOTIDE SEQUENCE [LARGE SCALE GENOMIC DNA]</scope>
    <source>
        <strain>ATCC 25618 / H37Rv</strain>
    </source>
</reference>
<reference key="2">
    <citation type="journal article" date="2011" name="Mol. Cell. Proteomics">
        <title>Proteogenomic analysis of Mycobacterium tuberculosis by high resolution mass spectrometry.</title>
        <authorList>
            <person name="Kelkar D.S."/>
            <person name="Kumar D."/>
            <person name="Kumar P."/>
            <person name="Balakrishnan L."/>
            <person name="Muthusamy B."/>
            <person name="Yadav A.K."/>
            <person name="Shrivastava P."/>
            <person name="Marimuthu A."/>
            <person name="Anand S."/>
            <person name="Sundaram H."/>
            <person name="Kingsbury R."/>
            <person name="Harsha H.C."/>
            <person name="Nair B."/>
            <person name="Prasad T.S."/>
            <person name="Chauhan D.S."/>
            <person name="Katoch K."/>
            <person name="Katoch V.M."/>
            <person name="Kumar P."/>
            <person name="Chaerkady R."/>
            <person name="Ramachandran S."/>
            <person name="Dash D."/>
            <person name="Pandey A."/>
        </authorList>
    </citation>
    <scope>IDENTIFICATION BY MASS SPECTROMETRY [LARGE SCALE ANALYSIS]</scope>
    <source>
        <strain>ATCC 25618 / H37Rv</strain>
    </source>
</reference>
<reference key="3">
    <citation type="journal article" date="2022" name="Genomics">
        <title>Deep N-terminomics of Mycobacterium tuberculosis H37Rv extensively correct annotated encoding genes.</title>
        <authorList>
            <person name="Shi J."/>
            <person name="Meng S."/>
            <person name="Wan L."/>
            <person name="Zhang Z."/>
            <person name="Jiang S."/>
            <person name="Zhu H."/>
            <person name="Dai E."/>
            <person name="Chang L."/>
            <person name="Gao H."/>
            <person name="Wan K."/>
            <person name="Zhang L."/>
            <person name="Zhao X."/>
            <person name="Liu H."/>
            <person name="Lyu Z."/>
            <person name="Zhang Y."/>
            <person name="Xu P."/>
        </authorList>
    </citation>
    <scope>PROTEIN SEQUENCE OF 2-17</scope>
    <scope>SEQUENCE REVISION TO N-TERMINUS</scope>
    <source>
        <strain>H37Rv</strain>
    </source>
</reference>